<reference key="1">
    <citation type="journal article" date="2002" name="Proc. Natl. Acad. Sci. U.S.A.">
        <title>The complete genome sequence of Chlorobium tepidum TLS, a photosynthetic, anaerobic, green-sulfur bacterium.</title>
        <authorList>
            <person name="Eisen J.A."/>
            <person name="Nelson K.E."/>
            <person name="Paulsen I.T."/>
            <person name="Heidelberg J.F."/>
            <person name="Wu M."/>
            <person name="Dodson R.J."/>
            <person name="DeBoy R.T."/>
            <person name="Gwinn M.L."/>
            <person name="Nelson W.C."/>
            <person name="Haft D.H."/>
            <person name="Hickey E.K."/>
            <person name="Peterson J.D."/>
            <person name="Durkin A.S."/>
            <person name="Kolonay J.F."/>
            <person name="Yang F."/>
            <person name="Holt I.E."/>
            <person name="Umayam L.A."/>
            <person name="Mason T.M."/>
            <person name="Brenner M."/>
            <person name="Shea T.P."/>
            <person name="Parksey D.S."/>
            <person name="Nierman W.C."/>
            <person name="Feldblyum T.V."/>
            <person name="Hansen C.L."/>
            <person name="Craven M.B."/>
            <person name="Radune D."/>
            <person name="Vamathevan J.J."/>
            <person name="Khouri H.M."/>
            <person name="White O."/>
            <person name="Gruber T.M."/>
            <person name="Ketchum K.A."/>
            <person name="Venter J.C."/>
            <person name="Tettelin H."/>
            <person name="Bryant D.A."/>
            <person name="Fraser C.M."/>
        </authorList>
    </citation>
    <scope>NUCLEOTIDE SEQUENCE [LARGE SCALE GENOMIC DNA]</scope>
    <source>
        <strain>ATCC 49652 / DSM 12025 / NBRC 103806 / TLS</strain>
    </source>
</reference>
<feature type="chain" id="PRO_0000181858" description="Ribosome maturation factor RimP">
    <location>
        <begin position="1"/>
        <end position="173"/>
    </location>
</feature>
<sequence length="173" mass="18872">MTDDLIKKAIGETIGELSATSGEEIYVVEAAIRAGGRKIELTVDTDKGVSIDQCAKLSRAIRARLEACEEDSMLSSGEFDLMVSSPGIGEPIQVQRQYLRHLGRLIRVNYLDEEEQPKEITGKLLEAAVGPEAEQPSITIEAVKEGRKKRTAGEPPVTIRLADVVRAVVQTEL</sequence>
<comment type="function">
    <text evidence="1">Required for maturation of 30S ribosomal subunits.</text>
</comment>
<comment type="subcellular location">
    <subcellularLocation>
        <location evidence="1">Cytoplasm</location>
    </subcellularLocation>
</comment>
<comment type="similarity">
    <text evidence="1">Belongs to the RimP family.</text>
</comment>
<keyword id="KW-0963">Cytoplasm</keyword>
<keyword id="KW-1185">Reference proteome</keyword>
<keyword id="KW-0690">Ribosome biogenesis</keyword>
<evidence type="ECO:0000255" key="1">
    <source>
        <dbReference type="HAMAP-Rule" id="MF_01077"/>
    </source>
</evidence>
<organism>
    <name type="scientific">Chlorobaculum tepidum (strain ATCC 49652 / DSM 12025 / NBRC 103806 / TLS)</name>
    <name type="common">Chlorobium tepidum</name>
    <dbReference type="NCBI Taxonomy" id="194439"/>
    <lineage>
        <taxon>Bacteria</taxon>
        <taxon>Pseudomonadati</taxon>
        <taxon>Chlorobiota</taxon>
        <taxon>Chlorobiia</taxon>
        <taxon>Chlorobiales</taxon>
        <taxon>Chlorobiaceae</taxon>
        <taxon>Chlorobaculum</taxon>
    </lineage>
</organism>
<protein>
    <recommendedName>
        <fullName evidence="1">Ribosome maturation factor RimP</fullName>
    </recommendedName>
</protein>
<accession>Q8KFT3</accession>
<gene>
    <name evidence="1" type="primary">rimP</name>
    <name type="ordered locus">CT0239</name>
</gene>
<name>RIMP_CHLTE</name>
<dbReference type="EMBL" id="AE006470">
    <property type="protein sequence ID" value="AAM71485.1"/>
    <property type="molecule type" value="Genomic_DNA"/>
</dbReference>
<dbReference type="RefSeq" id="NP_661143.1">
    <property type="nucleotide sequence ID" value="NC_002932.3"/>
</dbReference>
<dbReference type="RefSeq" id="WP_010931931.1">
    <property type="nucleotide sequence ID" value="NC_002932.3"/>
</dbReference>
<dbReference type="SMR" id="Q8KFT3"/>
<dbReference type="STRING" id="194439.CT0239"/>
<dbReference type="EnsemblBacteria" id="AAM71485">
    <property type="protein sequence ID" value="AAM71485"/>
    <property type="gene ID" value="CT0239"/>
</dbReference>
<dbReference type="KEGG" id="cte:CT0239"/>
<dbReference type="PATRIC" id="fig|194439.7.peg.231"/>
<dbReference type="eggNOG" id="COG0779">
    <property type="taxonomic scope" value="Bacteria"/>
</dbReference>
<dbReference type="HOGENOM" id="CLU_070525_3_1_10"/>
<dbReference type="OrthoDB" id="9789702at2"/>
<dbReference type="Proteomes" id="UP000001007">
    <property type="component" value="Chromosome"/>
</dbReference>
<dbReference type="GO" id="GO:0005829">
    <property type="term" value="C:cytosol"/>
    <property type="evidence" value="ECO:0007669"/>
    <property type="project" value="TreeGrafter"/>
</dbReference>
<dbReference type="GO" id="GO:0000028">
    <property type="term" value="P:ribosomal small subunit assembly"/>
    <property type="evidence" value="ECO:0007669"/>
    <property type="project" value="TreeGrafter"/>
</dbReference>
<dbReference type="GO" id="GO:0006412">
    <property type="term" value="P:translation"/>
    <property type="evidence" value="ECO:0007669"/>
    <property type="project" value="TreeGrafter"/>
</dbReference>
<dbReference type="Gene3D" id="3.30.300.70">
    <property type="entry name" value="RimP-like superfamily, N-terminal"/>
    <property type="match status" value="1"/>
</dbReference>
<dbReference type="HAMAP" id="MF_01077">
    <property type="entry name" value="RimP"/>
    <property type="match status" value="1"/>
</dbReference>
<dbReference type="InterPro" id="IPR003728">
    <property type="entry name" value="Ribosome_maturation_RimP"/>
</dbReference>
<dbReference type="InterPro" id="IPR028998">
    <property type="entry name" value="RimP_C"/>
</dbReference>
<dbReference type="InterPro" id="IPR028989">
    <property type="entry name" value="RimP_N"/>
</dbReference>
<dbReference type="InterPro" id="IPR035956">
    <property type="entry name" value="RimP_N_sf"/>
</dbReference>
<dbReference type="NCBIfam" id="NF011234">
    <property type="entry name" value="PRK14641.1"/>
    <property type="match status" value="1"/>
</dbReference>
<dbReference type="PANTHER" id="PTHR33867">
    <property type="entry name" value="RIBOSOME MATURATION FACTOR RIMP"/>
    <property type="match status" value="1"/>
</dbReference>
<dbReference type="PANTHER" id="PTHR33867:SF1">
    <property type="entry name" value="RIBOSOME MATURATION FACTOR RIMP"/>
    <property type="match status" value="1"/>
</dbReference>
<dbReference type="Pfam" id="PF17384">
    <property type="entry name" value="DUF150_C"/>
    <property type="match status" value="1"/>
</dbReference>
<dbReference type="Pfam" id="PF02576">
    <property type="entry name" value="RimP_N"/>
    <property type="match status" value="1"/>
</dbReference>
<dbReference type="SUPFAM" id="SSF75420">
    <property type="entry name" value="YhbC-like, N-terminal domain"/>
    <property type="match status" value="1"/>
</dbReference>
<proteinExistence type="inferred from homology"/>